<dbReference type="EMBL" id="CM001199">
    <property type="protein sequence ID" value="EGP87767.1"/>
    <property type="molecule type" value="Genomic_DNA"/>
</dbReference>
<dbReference type="RefSeq" id="XP_003852791.1">
    <property type="nucleotide sequence ID" value="XM_003852743.1"/>
</dbReference>
<dbReference type="SMR" id="F9X9V3"/>
<dbReference type="EnsemblFungi" id="Mycgr3T70577">
    <property type="protein sequence ID" value="Mycgr3P70577"/>
    <property type="gene ID" value="Mycgr3G70577"/>
</dbReference>
<dbReference type="GeneID" id="13397142"/>
<dbReference type="KEGG" id="ztr:MYCGRDRAFT_70577"/>
<dbReference type="VEuPathDB" id="FungiDB:ZTRI_4.4"/>
<dbReference type="eggNOG" id="KOG0254">
    <property type="taxonomic scope" value="Eukaryota"/>
</dbReference>
<dbReference type="HOGENOM" id="CLU_012970_2_2_1"/>
<dbReference type="InParanoid" id="F9X9V3"/>
<dbReference type="OMA" id="LAPKPMM"/>
<dbReference type="OrthoDB" id="2241241at2759"/>
<dbReference type="Proteomes" id="UP000008062">
    <property type="component" value="Chromosome 4"/>
</dbReference>
<dbReference type="GO" id="GO:0005886">
    <property type="term" value="C:plasma membrane"/>
    <property type="evidence" value="ECO:0007669"/>
    <property type="project" value="UniProtKB-SubCell"/>
</dbReference>
<dbReference type="GO" id="GO:0022857">
    <property type="term" value="F:transmembrane transporter activity"/>
    <property type="evidence" value="ECO:0007669"/>
    <property type="project" value="TreeGrafter"/>
</dbReference>
<dbReference type="Gene3D" id="1.20.1250.20">
    <property type="entry name" value="MFS general substrate transporter like domains"/>
    <property type="match status" value="1"/>
</dbReference>
<dbReference type="InterPro" id="IPR036259">
    <property type="entry name" value="MFS_trans_sf"/>
</dbReference>
<dbReference type="PANTHER" id="PTHR23501:SF58">
    <property type="entry name" value="LOW AFFINITY HEME TRANSPORTER STR3"/>
    <property type="match status" value="1"/>
</dbReference>
<dbReference type="PANTHER" id="PTHR23501">
    <property type="entry name" value="MAJOR FACILITATOR SUPERFAMILY"/>
    <property type="match status" value="1"/>
</dbReference>
<dbReference type="SUPFAM" id="SSF103473">
    <property type="entry name" value="MFS general substrate transporter"/>
    <property type="match status" value="2"/>
</dbReference>
<accession>F9X9V3</accession>
<reference key="1">
    <citation type="journal article" date="2011" name="PLoS Genet.">
        <title>Finished genome of the fungal wheat pathogen Mycosphaerella graminicola reveals dispensome structure, chromosome plasticity, and stealth pathogenesis.</title>
        <authorList>
            <person name="Goodwin S.B."/>
            <person name="Ben M'barek S."/>
            <person name="Dhillon B."/>
            <person name="Wittenberg A.H.J."/>
            <person name="Crane C.F."/>
            <person name="Hane J.K."/>
            <person name="Foster A.J."/>
            <person name="Van der Lee T.A.J."/>
            <person name="Grimwood J."/>
            <person name="Aerts A."/>
            <person name="Antoniw J."/>
            <person name="Bailey A."/>
            <person name="Bluhm B."/>
            <person name="Bowler J."/>
            <person name="Bristow J."/>
            <person name="van der Burgt A."/>
            <person name="Canto-Canche B."/>
            <person name="Churchill A.C.L."/>
            <person name="Conde-Ferraez L."/>
            <person name="Cools H.J."/>
            <person name="Coutinho P.M."/>
            <person name="Csukai M."/>
            <person name="Dehal P."/>
            <person name="De Wit P."/>
            <person name="Donzelli B."/>
            <person name="van de Geest H.C."/>
            <person name="van Ham R.C.H.J."/>
            <person name="Hammond-Kosack K.E."/>
            <person name="Henrissat B."/>
            <person name="Kilian A."/>
            <person name="Kobayashi A.K."/>
            <person name="Koopmann E."/>
            <person name="Kourmpetis Y."/>
            <person name="Kuzniar A."/>
            <person name="Lindquist E."/>
            <person name="Lombard V."/>
            <person name="Maliepaard C."/>
            <person name="Martins N."/>
            <person name="Mehrabi R."/>
            <person name="Nap J.P.H."/>
            <person name="Ponomarenko A."/>
            <person name="Rudd J.J."/>
            <person name="Salamov A."/>
            <person name="Schmutz J."/>
            <person name="Schouten H.J."/>
            <person name="Shapiro H."/>
            <person name="Stergiopoulos I."/>
            <person name="Torriani S.F.F."/>
            <person name="Tu H."/>
            <person name="de Vries R.P."/>
            <person name="Waalwijk C."/>
            <person name="Ware S.B."/>
            <person name="Wiebenga A."/>
            <person name="Zwiers L.-H."/>
            <person name="Oliver R.P."/>
            <person name="Grigoriev I.V."/>
            <person name="Kema G.H.J."/>
        </authorList>
    </citation>
    <scope>NUCLEOTIDE SEQUENCE [LARGE SCALE GENOMIC DNA]</scope>
    <source>
        <strain>CBS 115943 / IPO323</strain>
    </source>
</reference>
<reference key="2">
    <citation type="journal article" date="2017" name="BMC Genomics">
        <title>In silico prediction and characterization of secondary metabolite biosynthetic gene clusters in the wheat pathogen Zymoseptoria tritici.</title>
        <authorList>
            <person name="Cairns T."/>
            <person name="Meyer V."/>
        </authorList>
    </citation>
    <scope>FUNCTION</scope>
</reference>
<sequence length="648" mass="70597">MRTSSESHSRSDAFNGKNDASQVTVDSDSASKDHHDHDHHHKDTSINERQSQHVHQQAGVSKVEAFNKALYQSGPSGRLLLYVLVASLALTMFAYALDQGITYQFNAIASSDFSQHASLGAVNTASSIIRAISKPFLGKLSDITSRPTTYVVVLVVYAVGFAVAASSQGLAAYIVGASFTAFGKSGLDLLSDIIVGDLTPLEWRAFWSGMLATPFLITTFINGFISDAFVPNNWRWGLGMFAIMMPVLLTPAIWTLYGMQLKAAKMGMVSMGDSGLARKDGVKVQGMQQYLPMARSIAVEMDLIGLLLLGLAFSLILLALNLAPASNGGWSNPSMIAMLVIGFVILGLFIAYEALLAPVPITPKRILTNKAFLCALTVDVFNQMASATRNNYWSSYIYIIKPWSNYVWTIFIGTTTLTLCTMSPIGGLIHRATHRYKTLMVIGAIIKLIGYGVGLDGNSRSTLSTARLAVSQVMLGMGAWTVIGARVGSQASVPHQDLSVVISVMSLWSTMASSIGSTIAATIWQDRMLNYMREECPPSTPEATLKKIYGSIKTLKTKYDWEDPVRMGAIRAYTRTNGIILAVSLVLAAVPVVFSCLMPNYYLGKQQNAVTNTDVLGERTEVPRRVEEPTNGKPSLWQRVKRGYYKET</sequence>
<proteinExistence type="inferred from homology"/>
<name>FER7_ZYMTI</name>
<organism>
    <name type="scientific">Zymoseptoria tritici (strain CBS 115943 / IPO323)</name>
    <name type="common">Speckled leaf blotch fungus</name>
    <name type="synonym">Septoria tritici</name>
    <dbReference type="NCBI Taxonomy" id="336722"/>
    <lineage>
        <taxon>Eukaryota</taxon>
        <taxon>Fungi</taxon>
        <taxon>Dikarya</taxon>
        <taxon>Ascomycota</taxon>
        <taxon>Pezizomycotina</taxon>
        <taxon>Dothideomycetes</taxon>
        <taxon>Dothideomycetidae</taxon>
        <taxon>Mycosphaerellales</taxon>
        <taxon>Mycosphaerellaceae</taxon>
        <taxon>Zymoseptoria</taxon>
    </lineage>
</organism>
<comment type="function">
    <text evidence="5">Siderophore transporter; part of the gene cluster 14 that mediates the biosynthesis of a ferrichrome A-like siderophors which may contribute to organismal virulence.</text>
</comment>
<comment type="subcellular location">
    <subcellularLocation>
        <location evidence="4">Cell membrane</location>
        <topology evidence="1">Multi-pass membrane protein</topology>
    </subcellularLocation>
</comment>
<comment type="similarity">
    <text evidence="4">Belongs to the major facilitator superfamily.</text>
</comment>
<keyword id="KW-1003">Cell membrane</keyword>
<keyword id="KW-0472">Membrane</keyword>
<keyword id="KW-1185">Reference proteome</keyword>
<keyword id="KW-0812">Transmembrane</keyword>
<keyword id="KW-1133">Transmembrane helix</keyword>
<protein>
    <recommendedName>
        <fullName evidence="3">Siderophore transporter MYCGRDRAFT_70577</fullName>
    </recommendedName>
    <alternativeName>
        <fullName evidence="3">Ferrichrome A-like siderophore biosynthesis protein MYCGRDRAFT_70577</fullName>
    </alternativeName>
</protein>
<feature type="chain" id="PRO_0000451096" description="Siderophore transporter MYCGRDRAFT_70577">
    <location>
        <begin position="1"/>
        <end position="648"/>
    </location>
</feature>
<feature type="transmembrane region" description="Helical" evidence="1">
    <location>
        <begin position="79"/>
        <end position="99"/>
    </location>
</feature>
<feature type="transmembrane region" description="Helical" evidence="1">
    <location>
        <begin position="151"/>
        <end position="171"/>
    </location>
</feature>
<feature type="transmembrane region" description="Helical" evidence="1">
    <location>
        <begin position="205"/>
        <end position="225"/>
    </location>
</feature>
<feature type="transmembrane region" description="Helical" evidence="1">
    <location>
        <begin position="236"/>
        <end position="256"/>
    </location>
</feature>
<feature type="transmembrane region" description="Helical" evidence="1">
    <location>
        <begin position="303"/>
        <end position="323"/>
    </location>
</feature>
<feature type="transmembrane region" description="Helical" evidence="1">
    <location>
        <begin position="336"/>
        <end position="356"/>
    </location>
</feature>
<feature type="transmembrane region" description="Helical" evidence="1">
    <location>
        <begin position="409"/>
        <end position="429"/>
    </location>
</feature>
<feature type="transmembrane region" description="Helical" evidence="1">
    <location>
        <begin position="438"/>
        <end position="458"/>
    </location>
</feature>
<feature type="transmembrane region" description="Helical" evidence="1">
    <location>
        <begin position="468"/>
        <end position="488"/>
    </location>
</feature>
<feature type="transmembrane region" description="Helical" evidence="1">
    <location>
        <begin position="500"/>
        <end position="520"/>
    </location>
</feature>
<feature type="transmembrane region" description="Helical" evidence="1">
    <location>
        <begin position="578"/>
        <end position="598"/>
    </location>
</feature>
<feature type="region of interest" description="Disordered" evidence="2">
    <location>
        <begin position="1"/>
        <end position="58"/>
    </location>
</feature>
<feature type="compositionally biased region" description="Basic and acidic residues" evidence="2">
    <location>
        <begin position="1"/>
        <end position="11"/>
    </location>
</feature>
<feature type="compositionally biased region" description="Basic and acidic residues" evidence="2">
    <location>
        <begin position="29"/>
        <end position="46"/>
    </location>
</feature>
<feature type="compositionally biased region" description="Polar residues" evidence="2">
    <location>
        <begin position="47"/>
        <end position="58"/>
    </location>
</feature>
<gene>
    <name type="ORF">MYCGRDRAFT_70577</name>
</gene>
<evidence type="ECO:0000255" key="1"/>
<evidence type="ECO:0000256" key="2">
    <source>
        <dbReference type="SAM" id="MobiDB-lite"/>
    </source>
</evidence>
<evidence type="ECO:0000303" key="3">
    <source>
    </source>
</evidence>
<evidence type="ECO:0000305" key="4"/>
<evidence type="ECO:0000305" key="5">
    <source>
    </source>
</evidence>